<reference key="1">
    <citation type="submission" date="2008-06" db="EMBL/GenBank/DDBJ databases">
        <title>Complete sequence of Stenotrophomonas maltophilia R551-3.</title>
        <authorList>
            <consortium name="US DOE Joint Genome Institute"/>
            <person name="Lucas S."/>
            <person name="Copeland A."/>
            <person name="Lapidus A."/>
            <person name="Glavina del Rio T."/>
            <person name="Dalin E."/>
            <person name="Tice H."/>
            <person name="Pitluck S."/>
            <person name="Chain P."/>
            <person name="Malfatti S."/>
            <person name="Shin M."/>
            <person name="Vergez L."/>
            <person name="Lang D."/>
            <person name="Schmutz J."/>
            <person name="Larimer F."/>
            <person name="Land M."/>
            <person name="Hauser L."/>
            <person name="Kyrpides N."/>
            <person name="Mikhailova N."/>
            <person name="Taghavi S."/>
            <person name="Monchy S."/>
            <person name="Newman L."/>
            <person name="Vangronsveld J."/>
            <person name="van der Lelie D."/>
            <person name="Richardson P."/>
        </authorList>
    </citation>
    <scope>NUCLEOTIDE SEQUENCE [LARGE SCALE GENOMIC DNA]</scope>
    <source>
        <strain>R551-3</strain>
    </source>
</reference>
<sequence length="221" mass="22756">MKKAVVLLSGGMDSAAVIAMAQEQGFAVHALSVRYGQRHTSELDAAARVAKAQGVIAHKTVDVDLRSIGGSALTDDIDVPEAGGAGIPVTYVPARNTIMLSLALGWAEVLGANDIFCGVNAVDYSGYPDCRPEFVAAFQALANLATKSGVEGAGIKVHAPLQFLSKGQIVSEGVRLGVDFGLTVSCYNADANGAACSHCDACRLRAQGFTEAGVADPTLYA</sequence>
<comment type="function">
    <text evidence="1">Catalyzes the ATP-dependent conversion of 7-carboxy-7-deazaguanine (CDG) to 7-cyano-7-deazaguanine (preQ(0)).</text>
</comment>
<comment type="catalytic activity">
    <reaction evidence="1">
        <text>7-carboxy-7-deazaguanine + NH4(+) + ATP = 7-cyano-7-deazaguanine + ADP + phosphate + H2O + H(+)</text>
        <dbReference type="Rhea" id="RHEA:27982"/>
        <dbReference type="ChEBI" id="CHEBI:15377"/>
        <dbReference type="ChEBI" id="CHEBI:15378"/>
        <dbReference type="ChEBI" id="CHEBI:28938"/>
        <dbReference type="ChEBI" id="CHEBI:30616"/>
        <dbReference type="ChEBI" id="CHEBI:43474"/>
        <dbReference type="ChEBI" id="CHEBI:45075"/>
        <dbReference type="ChEBI" id="CHEBI:61036"/>
        <dbReference type="ChEBI" id="CHEBI:456216"/>
        <dbReference type="EC" id="6.3.4.20"/>
    </reaction>
</comment>
<comment type="cofactor">
    <cofactor evidence="1">
        <name>Zn(2+)</name>
        <dbReference type="ChEBI" id="CHEBI:29105"/>
    </cofactor>
    <text evidence="1">Binds 1 zinc ion per subunit.</text>
</comment>
<comment type="pathway">
    <text evidence="1">Purine metabolism; 7-cyano-7-deazaguanine biosynthesis.</text>
</comment>
<comment type="similarity">
    <text evidence="1">Belongs to the QueC family.</text>
</comment>
<name>QUEC_STRM5</name>
<evidence type="ECO:0000255" key="1">
    <source>
        <dbReference type="HAMAP-Rule" id="MF_01633"/>
    </source>
</evidence>
<gene>
    <name evidence="1" type="primary">queC</name>
    <name type="ordered locus">Smal_3115</name>
</gene>
<protein>
    <recommendedName>
        <fullName evidence="1">7-cyano-7-deazaguanine synthase</fullName>
        <ecNumber evidence="1">6.3.4.20</ecNumber>
    </recommendedName>
    <alternativeName>
        <fullName evidence="1">7-cyano-7-carbaguanine synthase</fullName>
    </alternativeName>
    <alternativeName>
        <fullName evidence="1">PreQ(0) synthase</fullName>
    </alternativeName>
    <alternativeName>
        <fullName evidence="1">Queuosine biosynthesis protein QueC</fullName>
    </alternativeName>
</protein>
<proteinExistence type="inferred from homology"/>
<feature type="chain" id="PRO_1000186639" description="7-cyano-7-deazaguanine synthase">
    <location>
        <begin position="1"/>
        <end position="221"/>
    </location>
</feature>
<feature type="binding site" evidence="1">
    <location>
        <begin position="8"/>
        <end position="18"/>
    </location>
    <ligand>
        <name>ATP</name>
        <dbReference type="ChEBI" id="CHEBI:30616"/>
    </ligand>
</feature>
<feature type="binding site" evidence="1">
    <location>
        <position position="186"/>
    </location>
    <ligand>
        <name>Zn(2+)</name>
        <dbReference type="ChEBI" id="CHEBI:29105"/>
    </ligand>
</feature>
<feature type="binding site" evidence="1">
    <location>
        <position position="196"/>
    </location>
    <ligand>
        <name>Zn(2+)</name>
        <dbReference type="ChEBI" id="CHEBI:29105"/>
    </ligand>
</feature>
<feature type="binding site" evidence="1">
    <location>
        <position position="199"/>
    </location>
    <ligand>
        <name>Zn(2+)</name>
        <dbReference type="ChEBI" id="CHEBI:29105"/>
    </ligand>
</feature>
<feature type="binding site" evidence="1">
    <location>
        <position position="202"/>
    </location>
    <ligand>
        <name>Zn(2+)</name>
        <dbReference type="ChEBI" id="CHEBI:29105"/>
    </ligand>
</feature>
<keyword id="KW-0067">ATP-binding</keyword>
<keyword id="KW-0436">Ligase</keyword>
<keyword id="KW-0479">Metal-binding</keyword>
<keyword id="KW-0547">Nucleotide-binding</keyword>
<keyword id="KW-0671">Queuosine biosynthesis</keyword>
<keyword id="KW-0862">Zinc</keyword>
<organism>
    <name type="scientific">Stenotrophomonas maltophilia (strain R551-3)</name>
    <dbReference type="NCBI Taxonomy" id="391008"/>
    <lineage>
        <taxon>Bacteria</taxon>
        <taxon>Pseudomonadati</taxon>
        <taxon>Pseudomonadota</taxon>
        <taxon>Gammaproteobacteria</taxon>
        <taxon>Lysobacterales</taxon>
        <taxon>Lysobacteraceae</taxon>
        <taxon>Stenotrophomonas</taxon>
        <taxon>Stenotrophomonas maltophilia group</taxon>
    </lineage>
</organism>
<accession>B4ST23</accession>
<dbReference type="EC" id="6.3.4.20" evidence="1"/>
<dbReference type="EMBL" id="CP001111">
    <property type="protein sequence ID" value="ACF52814.1"/>
    <property type="molecule type" value="Genomic_DNA"/>
</dbReference>
<dbReference type="RefSeq" id="WP_012511894.1">
    <property type="nucleotide sequence ID" value="NC_011071.1"/>
</dbReference>
<dbReference type="SMR" id="B4ST23"/>
<dbReference type="STRING" id="391008.Smal_3115"/>
<dbReference type="KEGG" id="smt:Smal_3115"/>
<dbReference type="eggNOG" id="COG0603">
    <property type="taxonomic scope" value="Bacteria"/>
</dbReference>
<dbReference type="HOGENOM" id="CLU_081854_1_1_6"/>
<dbReference type="OrthoDB" id="9789567at2"/>
<dbReference type="UniPathway" id="UPA00391"/>
<dbReference type="Proteomes" id="UP000001867">
    <property type="component" value="Chromosome"/>
</dbReference>
<dbReference type="GO" id="GO:0005524">
    <property type="term" value="F:ATP binding"/>
    <property type="evidence" value="ECO:0007669"/>
    <property type="project" value="UniProtKB-UniRule"/>
</dbReference>
<dbReference type="GO" id="GO:0016879">
    <property type="term" value="F:ligase activity, forming carbon-nitrogen bonds"/>
    <property type="evidence" value="ECO:0007669"/>
    <property type="project" value="UniProtKB-UniRule"/>
</dbReference>
<dbReference type="GO" id="GO:0008270">
    <property type="term" value="F:zinc ion binding"/>
    <property type="evidence" value="ECO:0007669"/>
    <property type="project" value="UniProtKB-UniRule"/>
</dbReference>
<dbReference type="GO" id="GO:0008616">
    <property type="term" value="P:queuosine biosynthetic process"/>
    <property type="evidence" value="ECO:0007669"/>
    <property type="project" value="UniProtKB-UniRule"/>
</dbReference>
<dbReference type="CDD" id="cd01995">
    <property type="entry name" value="QueC-like"/>
    <property type="match status" value="1"/>
</dbReference>
<dbReference type="FunFam" id="3.40.50.620:FF:000131">
    <property type="entry name" value="7-cyano-7-deazaguanine synthase"/>
    <property type="match status" value="1"/>
</dbReference>
<dbReference type="Gene3D" id="3.40.50.620">
    <property type="entry name" value="HUPs"/>
    <property type="match status" value="1"/>
</dbReference>
<dbReference type="HAMAP" id="MF_01633">
    <property type="entry name" value="QueC"/>
    <property type="match status" value="1"/>
</dbReference>
<dbReference type="InterPro" id="IPR018317">
    <property type="entry name" value="QueC"/>
</dbReference>
<dbReference type="InterPro" id="IPR014729">
    <property type="entry name" value="Rossmann-like_a/b/a_fold"/>
</dbReference>
<dbReference type="NCBIfam" id="TIGR00364">
    <property type="entry name" value="7-cyano-7-deazaguanine synthase QueC"/>
    <property type="match status" value="1"/>
</dbReference>
<dbReference type="PANTHER" id="PTHR42914">
    <property type="entry name" value="7-CYANO-7-DEAZAGUANINE SYNTHASE"/>
    <property type="match status" value="1"/>
</dbReference>
<dbReference type="PANTHER" id="PTHR42914:SF1">
    <property type="entry name" value="7-CYANO-7-DEAZAGUANINE SYNTHASE"/>
    <property type="match status" value="1"/>
</dbReference>
<dbReference type="Pfam" id="PF06508">
    <property type="entry name" value="QueC"/>
    <property type="match status" value="1"/>
</dbReference>
<dbReference type="PIRSF" id="PIRSF006293">
    <property type="entry name" value="ExsB"/>
    <property type="match status" value="1"/>
</dbReference>
<dbReference type="SUPFAM" id="SSF52402">
    <property type="entry name" value="Adenine nucleotide alpha hydrolases-like"/>
    <property type="match status" value="1"/>
</dbReference>